<proteinExistence type="inferred from homology"/>
<sequence>MDPRERVPPGNSDEETIGEAFDWLERTITELNRVAVNHLPRELIFQVWQRCWAYWREEQGMSSSYTKYRYLLLMQKAMFVHYTKGCRCLQEGHGPGGWRSGPPPPPPPGLA</sequence>
<gene>
    <name type="primary">vpx</name>
</gene>
<dbReference type="EMBL" id="L07625">
    <property type="protein sequence ID" value="AAA43944.1"/>
    <property type="molecule type" value="Genomic_RNA"/>
</dbReference>
<dbReference type="SMR" id="Q76636"/>
<dbReference type="Proteomes" id="UP000007428">
    <property type="component" value="Segment"/>
</dbReference>
<dbReference type="GO" id="GO:0042025">
    <property type="term" value="C:host cell nucleus"/>
    <property type="evidence" value="ECO:0007669"/>
    <property type="project" value="UniProtKB-SubCell"/>
</dbReference>
<dbReference type="GO" id="GO:0044423">
    <property type="term" value="C:virion component"/>
    <property type="evidence" value="ECO:0007669"/>
    <property type="project" value="UniProtKB-KW"/>
</dbReference>
<dbReference type="GO" id="GO:0052170">
    <property type="term" value="P:symbiont-mediated suppression of host innate immune response"/>
    <property type="evidence" value="ECO:0007669"/>
    <property type="project" value="UniProtKB-KW"/>
</dbReference>
<dbReference type="GO" id="GO:0019058">
    <property type="term" value="P:viral life cycle"/>
    <property type="evidence" value="ECO:0007669"/>
    <property type="project" value="InterPro"/>
</dbReference>
<dbReference type="Gene3D" id="1.20.5.4730">
    <property type="match status" value="1"/>
</dbReference>
<dbReference type="InterPro" id="IPR053711">
    <property type="entry name" value="Lentiviral_Vpx_assoc_factor"/>
</dbReference>
<dbReference type="InterPro" id="IPR000012">
    <property type="entry name" value="RetroV_VpR/X"/>
</dbReference>
<dbReference type="Pfam" id="PF00522">
    <property type="entry name" value="VPR"/>
    <property type="match status" value="1"/>
</dbReference>
<evidence type="ECO:0000250" key="1"/>
<evidence type="ECO:0000250" key="2">
    <source>
        <dbReference type="UniProtKB" id="P12454"/>
    </source>
</evidence>
<evidence type="ECO:0000250" key="3">
    <source>
        <dbReference type="UniProtKB" id="P18099"/>
    </source>
</evidence>
<evidence type="ECO:0000250" key="4">
    <source>
        <dbReference type="UniProtKB" id="P19508"/>
    </source>
</evidence>
<evidence type="ECO:0000305" key="5"/>
<organismHost>
    <name type="scientific">Homo sapiens</name>
    <name type="common">Human</name>
    <dbReference type="NCBI Taxonomy" id="9606"/>
</organismHost>
<reference key="1">
    <citation type="journal article" date="1993" name="J. Virol.">
        <title>Distinguishing features of an infectious molecular clone of the highly divergent and noncytopathic human immunodeficiency virus type 2 UC1 strain.</title>
        <authorList>
            <person name="Barnett S.W."/>
            <person name="Quiroga M."/>
            <person name="Werner A."/>
            <person name="Dina D."/>
            <person name="Levy J.A."/>
        </authorList>
    </citation>
    <scope>NUCLEOTIDE SEQUENCE</scope>
    <source>
        <strain>2UC1</strain>
    </source>
</reference>
<name>VPX_HV2UC</name>
<comment type="function">
    <text evidence="1">Plays a role in nuclear translocation of the viral pre-integration complex (PIC), thus is required for the virus to infect non-dividing cells. Targets specific host proteins for degradation by the 26S proteasome. Acts by associating with the cellular CUL4A-DDB1 E3 ligase complex through direct interaction with host VPRPB/DCAF-1. This change in the E3 ligase substrate specificity results in the degradation of host SAMHD1. In turn, SAMHD1 depletion allows viral replication in host myeloid cells by preventing SAMHD1-mediated hydrolysis of intracellular dNTPs necessary for reverse transcription (By similarity).</text>
</comment>
<comment type="subunit">
    <text evidence="1 2 3">Interacts with the P6 region of unprocessed GAG (By similarity). Interacts with host VPRBP/DCAF1, leading to change substrate specificity of the CUL4A-DDB1 E3 ligase complex (By similarity). Interacts with host NUP153 (By similarity).</text>
</comment>
<comment type="subcellular location">
    <subcellularLocation>
        <location>Virion</location>
    </subcellularLocation>
    <subcellularLocation>
        <location>Host nucleus</location>
    </subcellularLocation>
    <text evidence="1">Nuclear just after virion uncoating, or if expressed in the absence of unprocessed GAG.</text>
</comment>
<comment type="similarity">
    <text evidence="5">Belongs to the lentivirus VPX protein family.</text>
</comment>
<keyword id="KW-0014">AIDS</keyword>
<keyword id="KW-1048">Host nucleus</keyword>
<keyword id="KW-0945">Host-virus interaction</keyword>
<keyword id="KW-1090">Inhibition of host innate immune response by virus</keyword>
<keyword id="KW-0899">Viral immunoevasion</keyword>
<keyword id="KW-0946">Virion</keyword>
<feature type="chain" id="PRO_0000246772" description="Protein Vpx">
    <location>
        <begin position="1"/>
        <end position="111"/>
    </location>
</feature>
<feature type="region of interest" description="Binds to human NUP153" evidence="4">
    <location>
        <begin position="60"/>
        <end position="79"/>
    </location>
</feature>
<feature type="short sequence motif" description="Nuclear localization signal" evidence="1">
    <location>
        <begin position="64"/>
        <end position="71"/>
    </location>
</feature>
<accession>Q76636</accession>
<protein>
    <recommendedName>
        <fullName>Protein Vpx</fullName>
    </recommendedName>
    <alternativeName>
        <fullName>Viral protein X</fullName>
    </alternativeName>
    <alternativeName>
        <fullName>X ORF protein</fullName>
    </alternativeName>
</protein>
<organism>
    <name type="scientific">Human immunodeficiency virus type 2 subtype B (isolate UC1)</name>
    <name type="common">HIV-2</name>
    <dbReference type="NCBI Taxonomy" id="388822"/>
    <lineage>
        <taxon>Viruses</taxon>
        <taxon>Riboviria</taxon>
        <taxon>Pararnavirae</taxon>
        <taxon>Artverviricota</taxon>
        <taxon>Revtraviricetes</taxon>
        <taxon>Ortervirales</taxon>
        <taxon>Retroviridae</taxon>
        <taxon>Orthoretrovirinae</taxon>
        <taxon>Lentivirus</taxon>
        <taxon>Human immunodeficiency virus 2</taxon>
    </lineage>
</organism>